<feature type="chain" id="PRO_1000097971" description="ATP-dependent Clp protease ATP-binding subunit ClpX">
    <location>
        <begin position="1"/>
        <end position="419"/>
    </location>
</feature>
<feature type="domain" description="ClpX-type ZB" evidence="2">
    <location>
        <begin position="1"/>
        <end position="54"/>
    </location>
</feature>
<feature type="binding site" evidence="2">
    <location>
        <position position="13"/>
    </location>
    <ligand>
        <name>Zn(2+)</name>
        <dbReference type="ChEBI" id="CHEBI:29105"/>
    </ligand>
</feature>
<feature type="binding site" evidence="2">
    <location>
        <position position="16"/>
    </location>
    <ligand>
        <name>Zn(2+)</name>
        <dbReference type="ChEBI" id="CHEBI:29105"/>
    </ligand>
</feature>
<feature type="binding site" evidence="2">
    <location>
        <position position="35"/>
    </location>
    <ligand>
        <name>Zn(2+)</name>
        <dbReference type="ChEBI" id="CHEBI:29105"/>
    </ligand>
</feature>
<feature type="binding site" evidence="2">
    <location>
        <position position="38"/>
    </location>
    <ligand>
        <name>Zn(2+)</name>
        <dbReference type="ChEBI" id="CHEBI:29105"/>
    </ligand>
</feature>
<feature type="binding site" evidence="1">
    <location>
        <begin position="117"/>
        <end position="124"/>
    </location>
    <ligand>
        <name>ATP</name>
        <dbReference type="ChEBI" id="CHEBI:30616"/>
    </ligand>
</feature>
<protein>
    <recommendedName>
        <fullName evidence="1">ATP-dependent Clp protease ATP-binding subunit ClpX</fullName>
    </recommendedName>
</protein>
<accession>Q2RL30</accession>
<comment type="function">
    <text evidence="1">ATP-dependent specificity component of the Clp protease. It directs the protease to specific substrates. Can perform chaperone functions in the absence of ClpP.</text>
</comment>
<comment type="subunit">
    <text evidence="1">Component of the ClpX-ClpP complex. Forms a hexameric ring that, in the presence of ATP, binds to fourteen ClpP subunits assembled into a disk-like structure with a central cavity, resembling the structure of eukaryotic proteasomes.</text>
</comment>
<comment type="similarity">
    <text evidence="1">Belongs to the ClpX chaperone family.</text>
</comment>
<proteinExistence type="inferred from homology"/>
<gene>
    <name evidence="1" type="primary">clpX</name>
    <name type="ordered locus">Moth_0529</name>
</gene>
<organism>
    <name type="scientific">Moorella thermoacetica (strain ATCC 39073 / JCM 9320)</name>
    <dbReference type="NCBI Taxonomy" id="264732"/>
    <lineage>
        <taxon>Bacteria</taxon>
        <taxon>Bacillati</taxon>
        <taxon>Bacillota</taxon>
        <taxon>Clostridia</taxon>
        <taxon>Moorellales</taxon>
        <taxon>Moorellaceae</taxon>
        <taxon>Moorella</taxon>
    </lineage>
</organism>
<name>CLPX_MOOTA</name>
<sequence length="419" mass="46746">MYKYTDDKGQLKCSFCGKLQDQVKKLVAGPGVYICDECIELCNEIIEEELSEDLNLEMGELPKPKEIREILDQYVISQDQAKKALAVAVYNHYKRINLGMKMDDVELQKSNIIMLGPTGSGKTLLAQTLAKILNVPFAIADATSLTEAGYVGEDVENILLKLIQAADYDVEKAEKGIVYIDEIDKIARKSENPSITRDVSGEGVQQALLKILEGTIASVPPQGGRKHPHQEFIQLDTTNILFICGGAFDGLDKIIKNRISQKTMGFGAEIRGKNDVQVGDILKQVLPVDLLKYGLIPEFVGRLPVIVTLDALDETALIRVLTEPRNALVKQYQKLFEMDGVTLEFKEDALVTIAREAIKRETGARGLRAILEEIMLDVMYEIPSRNNISKCIITKDVVLRKEEPLLLTVERKKKKEETA</sequence>
<evidence type="ECO:0000255" key="1">
    <source>
        <dbReference type="HAMAP-Rule" id="MF_00175"/>
    </source>
</evidence>
<evidence type="ECO:0000255" key="2">
    <source>
        <dbReference type="PROSITE-ProRule" id="PRU01250"/>
    </source>
</evidence>
<keyword id="KW-0067">ATP-binding</keyword>
<keyword id="KW-0143">Chaperone</keyword>
<keyword id="KW-0479">Metal-binding</keyword>
<keyword id="KW-0547">Nucleotide-binding</keyword>
<keyword id="KW-0862">Zinc</keyword>
<dbReference type="EMBL" id="CP000232">
    <property type="protein sequence ID" value="ABC18859.1"/>
    <property type="molecule type" value="Genomic_DNA"/>
</dbReference>
<dbReference type="RefSeq" id="YP_429402.1">
    <property type="nucleotide sequence ID" value="NC_007644.1"/>
</dbReference>
<dbReference type="SMR" id="Q2RL30"/>
<dbReference type="STRING" id="264732.Moth_0529"/>
<dbReference type="EnsemblBacteria" id="ABC18859">
    <property type="protein sequence ID" value="ABC18859"/>
    <property type="gene ID" value="Moth_0529"/>
</dbReference>
<dbReference type="KEGG" id="mta:Moth_0529"/>
<dbReference type="PATRIC" id="fig|264732.11.peg.571"/>
<dbReference type="eggNOG" id="COG1219">
    <property type="taxonomic scope" value="Bacteria"/>
</dbReference>
<dbReference type="HOGENOM" id="CLU_014218_8_2_9"/>
<dbReference type="OrthoDB" id="9804062at2"/>
<dbReference type="GO" id="GO:0009376">
    <property type="term" value="C:HslUV protease complex"/>
    <property type="evidence" value="ECO:0007669"/>
    <property type="project" value="TreeGrafter"/>
</dbReference>
<dbReference type="GO" id="GO:0005524">
    <property type="term" value="F:ATP binding"/>
    <property type="evidence" value="ECO:0007669"/>
    <property type="project" value="UniProtKB-UniRule"/>
</dbReference>
<dbReference type="GO" id="GO:0016887">
    <property type="term" value="F:ATP hydrolysis activity"/>
    <property type="evidence" value="ECO:0007669"/>
    <property type="project" value="InterPro"/>
</dbReference>
<dbReference type="GO" id="GO:0140662">
    <property type="term" value="F:ATP-dependent protein folding chaperone"/>
    <property type="evidence" value="ECO:0007669"/>
    <property type="project" value="InterPro"/>
</dbReference>
<dbReference type="GO" id="GO:0046983">
    <property type="term" value="F:protein dimerization activity"/>
    <property type="evidence" value="ECO:0007669"/>
    <property type="project" value="InterPro"/>
</dbReference>
<dbReference type="GO" id="GO:0051082">
    <property type="term" value="F:unfolded protein binding"/>
    <property type="evidence" value="ECO:0007669"/>
    <property type="project" value="UniProtKB-UniRule"/>
</dbReference>
<dbReference type="GO" id="GO:0008270">
    <property type="term" value="F:zinc ion binding"/>
    <property type="evidence" value="ECO:0007669"/>
    <property type="project" value="InterPro"/>
</dbReference>
<dbReference type="GO" id="GO:0051301">
    <property type="term" value="P:cell division"/>
    <property type="evidence" value="ECO:0007669"/>
    <property type="project" value="TreeGrafter"/>
</dbReference>
<dbReference type="GO" id="GO:0051603">
    <property type="term" value="P:proteolysis involved in protein catabolic process"/>
    <property type="evidence" value="ECO:0007669"/>
    <property type="project" value="TreeGrafter"/>
</dbReference>
<dbReference type="CDD" id="cd19497">
    <property type="entry name" value="RecA-like_ClpX"/>
    <property type="match status" value="1"/>
</dbReference>
<dbReference type="FunFam" id="1.10.8.60:FF:000002">
    <property type="entry name" value="ATP-dependent Clp protease ATP-binding subunit ClpX"/>
    <property type="match status" value="1"/>
</dbReference>
<dbReference type="FunFam" id="3.40.50.300:FF:000005">
    <property type="entry name" value="ATP-dependent Clp protease ATP-binding subunit ClpX"/>
    <property type="match status" value="1"/>
</dbReference>
<dbReference type="Gene3D" id="1.10.8.60">
    <property type="match status" value="1"/>
</dbReference>
<dbReference type="Gene3D" id="6.20.220.10">
    <property type="entry name" value="ClpX chaperone, C4-type zinc finger domain"/>
    <property type="match status" value="1"/>
</dbReference>
<dbReference type="Gene3D" id="3.40.50.300">
    <property type="entry name" value="P-loop containing nucleotide triphosphate hydrolases"/>
    <property type="match status" value="1"/>
</dbReference>
<dbReference type="HAMAP" id="MF_00175">
    <property type="entry name" value="ClpX"/>
    <property type="match status" value="1"/>
</dbReference>
<dbReference type="InterPro" id="IPR003593">
    <property type="entry name" value="AAA+_ATPase"/>
</dbReference>
<dbReference type="InterPro" id="IPR050052">
    <property type="entry name" value="ATP-dep_Clp_protease_ClpX"/>
</dbReference>
<dbReference type="InterPro" id="IPR003959">
    <property type="entry name" value="ATPase_AAA_core"/>
</dbReference>
<dbReference type="InterPro" id="IPR019489">
    <property type="entry name" value="Clp_ATPase_C"/>
</dbReference>
<dbReference type="InterPro" id="IPR004487">
    <property type="entry name" value="Clp_protease_ATP-bd_su_ClpX"/>
</dbReference>
<dbReference type="InterPro" id="IPR046425">
    <property type="entry name" value="ClpX_bact"/>
</dbReference>
<dbReference type="InterPro" id="IPR027417">
    <property type="entry name" value="P-loop_NTPase"/>
</dbReference>
<dbReference type="InterPro" id="IPR010603">
    <property type="entry name" value="Znf_CppX_C4"/>
</dbReference>
<dbReference type="InterPro" id="IPR038366">
    <property type="entry name" value="Znf_CppX_C4_sf"/>
</dbReference>
<dbReference type="NCBIfam" id="TIGR00382">
    <property type="entry name" value="clpX"/>
    <property type="match status" value="1"/>
</dbReference>
<dbReference type="NCBIfam" id="NF003745">
    <property type="entry name" value="PRK05342.1"/>
    <property type="match status" value="1"/>
</dbReference>
<dbReference type="PANTHER" id="PTHR48102:SF7">
    <property type="entry name" value="ATP-DEPENDENT CLP PROTEASE ATP-BINDING SUBUNIT CLPX-LIKE, MITOCHONDRIAL"/>
    <property type="match status" value="1"/>
</dbReference>
<dbReference type="PANTHER" id="PTHR48102">
    <property type="entry name" value="ATP-DEPENDENT CLP PROTEASE ATP-BINDING SUBUNIT CLPX-LIKE, MITOCHONDRIAL-RELATED"/>
    <property type="match status" value="1"/>
</dbReference>
<dbReference type="Pfam" id="PF07724">
    <property type="entry name" value="AAA_2"/>
    <property type="match status" value="1"/>
</dbReference>
<dbReference type="Pfam" id="PF10431">
    <property type="entry name" value="ClpB_D2-small"/>
    <property type="match status" value="1"/>
</dbReference>
<dbReference type="Pfam" id="PF06689">
    <property type="entry name" value="zf-C4_ClpX"/>
    <property type="match status" value="1"/>
</dbReference>
<dbReference type="SMART" id="SM00382">
    <property type="entry name" value="AAA"/>
    <property type="match status" value="1"/>
</dbReference>
<dbReference type="SMART" id="SM01086">
    <property type="entry name" value="ClpB_D2-small"/>
    <property type="match status" value="1"/>
</dbReference>
<dbReference type="SMART" id="SM00994">
    <property type="entry name" value="zf-C4_ClpX"/>
    <property type="match status" value="1"/>
</dbReference>
<dbReference type="SUPFAM" id="SSF57716">
    <property type="entry name" value="Glucocorticoid receptor-like (DNA-binding domain)"/>
    <property type="match status" value="1"/>
</dbReference>
<dbReference type="SUPFAM" id="SSF52540">
    <property type="entry name" value="P-loop containing nucleoside triphosphate hydrolases"/>
    <property type="match status" value="1"/>
</dbReference>
<dbReference type="PROSITE" id="PS51902">
    <property type="entry name" value="CLPX_ZB"/>
    <property type="match status" value="1"/>
</dbReference>
<reference key="1">
    <citation type="journal article" date="2008" name="Environ. Microbiol.">
        <title>The complete genome sequence of Moorella thermoacetica (f. Clostridium thermoaceticum).</title>
        <authorList>
            <person name="Pierce E."/>
            <person name="Xie G."/>
            <person name="Barabote R.D."/>
            <person name="Saunders E."/>
            <person name="Han C.S."/>
            <person name="Detter J.C."/>
            <person name="Richardson P."/>
            <person name="Brettin T.S."/>
            <person name="Das A."/>
            <person name="Ljungdahl L.G."/>
            <person name="Ragsdale S.W."/>
        </authorList>
    </citation>
    <scope>NUCLEOTIDE SEQUENCE [LARGE SCALE GENOMIC DNA]</scope>
    <source>
        <strain>ATCC 39073 / JCM 9320</strain>
    </source>
</reference>